<gene>
    <name evidence="1" type="primary">fusA</name>
    <name type="ordered locus">HD_0657</name>
</gene>
<reference key="1">
    <citation type="submission" date="2003-06" db="EMBL/GenBank/DDBJ databases">
        <title>The complete genome sequence of Haemophilus ducreyi.</title>
        <authorList>
            <person name="Munson R.S. Jr."/>
            <person name="Ray W.C."/>
            <person name="Mahairas G."/>
            <person name="Sabo P."/>
            <person name="Mungur R."/>
            <person name="Johnson L."/>
            <person name="Nguyen D."/>
            <person name="Wang J."/>
            <person name="Forst C."/>
            <person name="Hood L."/>
        </authorList>
    </citation>
    <scope>NUCLEOTIDE SEQUENCE [LARGE SCALE GENOMIC DNA]</scope>
    <source>
        <strain>35000HP / ATCC 700724</strain>
    </source>
</reference>
<evidence type="ECO:0000255" key="1">
    <source>
        <dbReference type="HAMAP-Rule" id="MF_00054"/>
    </source>
</evidence>
<comment type="function">
    <text evidence="1">Catalyzes the GTP-dependent ribosomal translocation step during translation elongation. During this step, the ribosome changes from the pre-translocational (PRE) to the post-translocational (POST) state as the newly formed A-site-bound peptidyl-tRNA and P-site-bound deacylated tRNA move to the P and E sites, respectively. Catalyzes the coordinated movement of the two tRNA molecules, the mRNA and conformational changes in the ribosome.</text>
</comment>
<comment type="subcellular location">
    <subcellularLocation>
        <location evidence="1">Cytoplasm</location>
    </subcellularLocation>
</comment>
<comment type="similarity">
    <text evidence="1">Belongs to the TRAFAC class translation factor GTPase superfamily. Classic translation factor GTPase family. EF-G/EF-2 subfamily.</text>
</comment>
<keyword id="KW-0963">Cytoplasm</keyword>
<keyword id="KW-0251">Elongation factor</keyword>
<keyword id="KW-0342">GTP-binding</keyword>
<keyword id="KW-0547">Nucleotide-binding</keyword>
<keyword id="KW-0648">Protein biosynthesis</keyword>
<keyword id="KW-1185">Reference proteome</keyword>
<dbReference type="EMBL" id="AE017143">
    <property type="protein sequence ID" value="AAP95582.1"/>
    <property type="molecule type" value="Genomic_DNA"/>
</dbReference>
<dbReference type="RefSeq" id="WP_010944635.1">
    <property type="nucleotide sequence ID" value="NC_002940.2"/>
</dbReference>
<dbReference type="SMR" id="Q7VNA2"/>
<dbReference type="STRING" id="233412.HD_0657"/>
<dbReference type="KEGG" id="hdu:HD_0657"/>
<dbReference type="eggNOG" id="COG0480">
    <property type="taxonomic scope" value="Bacteria"/>
</dbReference>
<dbReference type="HOGENOM" id="CLU_002794_4_1_6"/>
<dbReference type="OrthoDB" id="9804431at2"/>
<dbReference type="Proteomes" id="UP000001022">
    <property type="component" value="Chromosome"/>
</dbReference>
<dbReference type="GO" id="GO:0005737">
    <property type="term" value="C:cytoplasm"/>
    <property type="evidence" value="ECO:0007669"/>
    <property type="project" value="UniProtKB-SubCell"/>
</dbReference>
<dbReference type="GO" id="GO:0005525">
    <property type="term" value="F:GTP binding"/>
    <property type="evidence" value="ECO:0007669"/>
    <property type="project" value="UniProtKB-UniRule"/>
</dbReference>
<dbReference type="GO" id="GO:0003924">
    <property type="term" value="F:GTPase activity"/>
    <property type="evidence" value="ECO:0007669"/>
    <property type="project" value="InterPro"/>
</dbReference>
<dbReference type="GO" id="GO:0097216">
    <property type="term" value="F:guanosine tetraphosphate binding"/>
    <property type="evidence" value="ECO:0007669"/>
    <property type="project" value="UniProtKB-ARBA"/>
</dbReference>
<dbReference type="GO" id="GO:0003746">
    <property type="term" value="F:translation elongation factor activity"/>
    <property type="evidence" value="ECO:0007669"/>
    <property type="project" value="UniProtKB-UniRule"/>
</dbReference>
<dbReference type="GO" id="GO:0032790">
    <property type="term" value="P:ribosome disassembly"/>
    <property type="evidence" value="ECO:0007669"/>
    <property type="project" value="TreeGrafter"/>
</dbReference>
<dbReference type="CDD" id="cd01886">
    <property type="entry name" value="EF-G"/>
    <property type="match status" value="1"/>
</dbReference>
<dbReference type="CDD" id="cd16262">
    <property type="entry name" value="EFG_III"/>
    <property type="match status" value="1"/>
</dbReference>
<dbReference type="CDD" id="cd01434">
    <property type="entry name" value="EFG_mtEFG1_IV"/>
    <property type="match status" value="1"/>
</dbReference>
<dbReference type="CDD" id="cd03713">
    <property type="entry name" value="EFG_mtEFG_C"/>
    <property type="match status" value="1"/>
</dbReference>
<dbReference type="CDD" id="cd04088">
    <property type="entry name" value="EFG_mtEFG_II"/>
    <property type="match status" value="1"/>
</dbReference>
<dbReference type="FunFam" id="2.40.30.10:FF:000006">
    <property type="entry name" value="Elongation factor G"/>
    <property type="match status" value="1"/>
</dbReference>
<dbReference type="FunFam" id="3.30.230.10:FF:000003">
    <property type="entry name" value="Elongation factor G"/>
    <property type="match status" value="1"/>
</dbReference>
<dbReference type="FunFam" id="3.30.70.240:FF:000001">
    <property type="entry name" value="Elongation factor G"/>
    <property type="match status" value="1"/>
</dbReference>
<dbReference type="FunFam" id="3.30.70.870:FF:000001">
    <property type="entry name" value="Elongation factor G"/>
    <property type="match status" value="1"/>
</dbReference>
<dbReference type="FunFam" id="3.40.50.300:FF:000029">
    <property type="entry name" value="Elongation factor G"/>
    <property type="match status" value="1"/>
</dbReference>
<dbReference type="Gene3D" id="3.30.230.10">
    <property type="match status" value="1"/>
</dbReference>
<dbReference type="Gene3D" id="3.30.70.240">
    <property type="match status" value="1"/>
</dbReference>
<dbReference type="Gene3D" id="3.30.70.870">
    <property type="entry name" value="Elongation Factor G (Translational Gtpase), domain 3"/>
    <property type="match status" value="1"/>
</dbReference>
<dbReference type="Gene3D" id="3.40.50.300">
    <property type="entry name" value="P-loop containing nucleotide triphosphate hydrolases"/>
    <property type="match status" value="1"/>
</dbReference>
<dbReference type="Gene3D" id="2.40.30.10">
    <property type="entry name" value="Translation factors"/>
    <property type="match status" value="1"/>
</dbReference>
<dbReference type="HAMAP" id="MF_00054_B">
    <property type="entry name" value="EF_G_EF_2_B"/>
    <property type="match status" value="1"/>
</dbReference>
<dbReference type="InterPro" id="IPR041095">
    <property type="entry name" value="EFG_II"/>
</dbReference>
<dbReference type="InterPro" id="IPR009022">
    <property type="entry name" value="EFG_III"/>
</dbReference>
<dbReference type="InterPro" id="IPR035647">
    <property type="entry name" value="EFG_III/V"/>
</dbReference>
<dbReference type="InterPro" id="IPR047872">
    <property type="entry name" value="EFG_IV"/>
</dbReference>
<dbReference type="InterPro" id="IPR035649">
    <property type="entry name" value="EFG_V"/>
</dbReference>
<dbReference type="InterPro" id="IPR000640">
    <property type="entry name" value="EFG_V-like"/>
</dbReference>
<dbReference type="InterPro" id="IPR004161">
    <property type="entry name" value="EFTu-like_2"/>
</dbReference>
<dbReference type="InterPro" id="IPR031157">
    <property type="entry name" value="G_TR_CS"/>
</dbReference>
<dbReference type="InterPro" id="IPR027417">
    <property type="entry name" value="P-loop_NTPase"/>
</dbReference>
<dbReference type="InterPro" id="IPR020568">
    <property type="entry name" value="Ribosomal_Su5_D2-typ_SF"/>
</dbReference>
<dbReference type="InterPro" id="IPR014721">
    <property type="entry name" value="Ribsml_uS5_D2-typ_fold_subgr"/>
</dbReference>
<dbReference type="InterPro" id="IPR005225">
    <property type="entry name" value="Small_GTP-bd"/>
</dbReference>
<dbReference type="InterPro" id="IPR000795">
    <property type="entry name" value="T_Tr_GTP-bd_dom"/>
</dbReference>
<dbReference type="InterPro" id="IPR009000">
    <property type="entry name" value="Transl_B-barrel_sf"/>
</dbReference>
<dbReference type="InterPro" id="IPR004540">
    <property type="entry name" value="Transl_elong_EFG/EF2"/>
</dbReference>
<dbReference type="InterPro" id="IPR005517">
    <property type="entry name" value="Transl_elong_EFG/EF2_IV"/>
</dbReference>
<dbReference type="NCBIfam" id="TIGR00484">
    <property type="entry name" value="EF-G"/>
    <property type="match status" value="1"/>
</dbReference>
<dbReference type="NCBIfam" id="NF009381">
    <property type="entry name" value="PRK12740.1-5"/>
    <property type="match status" value="1"/>
</dbReference>
<dbReference type="NCBIfam" id="TIGR00231">
    <property type="entry name" value="small_GTP"/>
    <property type="match status" value="1"/>
</dbReference>
<dbReference type="PANTHER" id="PTHR43261:SF1">
    <property type="entry name" value="RIBOSOME-RELEASING FACTOR 2, MITOCHONDRIAL"/>
    <property type="match status" value="1"/>
</dbReference>
<dbReference type="PANTHER" id="PTHR43261">
    <property type="entry name" value="TRANSLATION ELONGATION FACTOR G-RELATED"/>
    <property type="match status" value="1"/>
</dbReference>
<dbReference type="Pfam" id="PF00679">
    <property type="entry name" value="EFG_C"/>
    <property type="match status" value="1"/>
</dbReference>
<dbReference type="Pfam" id="PF14492">
    <property type="entry name" value="EFG_III"/>
    <property type="match status" value="1"/>
</dbReference>
<dbReference type="Pfam" id="PF03764">
    <property type="entry name" value="EFG_IV"/>
    <property type="match status" value="1"/>
</dbReference>
<dbReference type="Pfam" id="PF00009">
    <property type="entry name" value="GTP_EFTU"/>
    <property type="match status" value="1"/>
</dbReference>
<dbReference type="Pfam" id="PF03144">
    <property type="entry name" value="GTP_EFTU_D2"/>
    <property type="match status" value="1"/>
</dbReference>
<dbReference type="PRINTS" id="PR00315">
    <property type="entry name" value="ELONGATNFCT"/>
</dbReference>
<dbReference type="SMART" id="SM00838">
    <property type="entry name" value="EFG_C"/>
    <property type="match status" value="1"/>
</dbReference>
<dbReference type="SMART" id="SM00889">
    <property type="entry name" value="EFG_IV"/>
    <property type="match status" value="1"/>
</dbReference>
<dbReference type="SUPFAM" id="SSF54980">
    <property type="entry name" value="EF-G C-terminal domain-like"/>
    <property type="match status" value="2"/>
</dbReference>
<dbReference type="SUPFAM" id="SSF52540">
    <property type="entry name" value="P-loop containing nucleoside triphosphate hydrolases"/>
    <property type="match status" value="1"/>
</dbReference>
<dbReference type="SUPFAM" id="SSF54211">
    <property type="entry name" value="Ribosomal protein S5 domain 2-like"/>
    <property type="match status" value="1"/>
</dbReference>
<dbReference type="SUPFAM" id="SSF50447">
    <property type="entry name" value="Translation proteins"/>
    <property type="match status" value="1"/>
</dbReference>
<dbReference type="PROSITE" id="PS00301">
    <property type="entry name" value="G_TR_1"/>
    <property type="match status" value="1"/>
</dbReference>
<dbReference type="PROSITE" id="PS51722">
    <property type="entry name" value="G_TR_2"/>
    <property type="match status" value="1"/>
</dbReference>
<protein>
    <recommendedName>
        <fullName evidence="1">Elongation factor G</fullName>
        <shortName evidence="1">EF-G</shortName>
    </recommendedName>
</protein>
<accession>Q7VNA2</accession>
<feature type="chain" id="PRO_0000091131" description="Elongation factor G">
    <location>
        <begin position="1"/>
        <end position="701"/>
    </location>
</feature>
<feature type="domain" description="tr-type G">
    <location>
        <begin position="8"/>
        <end position="290"/>
    </location>
</feature>
<feature type="binding site" evidence="1">
    <location>
        <begin position="17"/>
        <end position="24"/>
    </location>
    <ligand>
        <name>GTP</name>
        <dbReference type="ChEBI" id="CHEBI:37565"/>
    </ligand>
</feature>
<feature type="binding site" evidence="1">
    <location>
        <begin position="88"/>
        <end position="92"/>
    </location>
    <ligand>
        <name>GTP</name>
        <dbReference type="ChEBI" id="CHEBI:37565"/>
    </ligand>
</feature>
<feature type="binding site" evidence="1">
    <location>
        <begin position="142"/>
        <end position="145"/>
    </location>
    <ligand>
        <name>GTP</name>
        <dbReference type="ChEBI" id="CHEBI:37565"/>
    </ligand>
</feature>
<name>EFG_HAEDU</name>
<sequence>MARTTPISLYRNIGISAHIDAGKTTTTERILFYTGVSHKIGEVHDGAATMDWMEQEQERGITITSAATTAFWSGMSQQYQQHRINVIDTPGHVDFTIEVERSMRVLDGAVMVYCAVGGVQPQSETVWRQANKYGVPRIAFVNKMDRTGANFLRVVEQIKTRLGGNVVALQLPIGAEDNFTGIVDLVKMKAINWNEADQGMTFTYEDIPAEMLSECEERRAMLVEAAAEASEELMEKFFEAGDLSEEEIKTALRQRVLAGEIIPVCCGSAFKNKGVQAMLDAVIDYLPAPTDIPAIKGINEDESEGERHASDEEPFAALAFKIATDPFVGNLTFFRVYSGVINSGDTVYNSVKQKRERFGRIVQMHANKREEIKEVRAGDIAAAIGLKEVGTGDTLCAQNAPIILERMEFPEPVISVAVEPKTKADQEKMGLALGRLAQEDPSFRVHTDEESGETIISGMGELHLDIIVDRMRREFKVEANIGKPQVSYRETIRTRVNDVEGKHAKQSGGRGQYGHVVIDLYPLDAEGPGYEFVNEIKGGVIPGEFIPAVDKGIQEQLKSGPLAGYPVEDIGVRLHFGSYHDVDSSELAFKLAASLAFKAAFAKANPVLLEPIMKVEVETPPDYVGDVIGDLSRRRAMVNGQEATEFVVKINAEVPLSEMFGYATDLRSQTQGRASYSMEPLKYSEAPTSVAAAIIEARKAK</sequence>
<proteinExistence type="inferred from homology"/>
<organism>
    <name type="scientific">Haemophilus ducreyi (strain 35000HP / ATCC 700724)</name>
    <dbReference type="NCBI Taxonomy" id="233412"/>
    <lineage>
        <taxon>Bacteria</taxon>
        <taxon>Pseudomonadati</taxon>
        <taxon>Pseudomonadota</taxon>
        <taxon>Gammaproteobacteria</taxon>
        <taxon>Pasteurellales</taxon>
        <taxon>Pasteurellaceae</taxon>
        <taxon>Haemophilus</taxon>
    </lineage>
</organism>